<comment type="subunit">
    <text evidence="1">Part of the 50S ribosomal subunit.</text>
</comment>
<comment type="similarity">
    <text evidence="1">Belongs to the universal ribosomal protein uL30 family.</text>
</comment>
<name>RL30_YERPY</name>
<feature type="chain" id="PRO_1000144733" description="Large ribosomal subunit protein uL30">
    <location>
        <begin position="1"/>
        <end position="59"/>
    </location>
</feature>
<proteinExistence type="inferred from homology"/>
<dbReference type="EMBL" id="CP000950">
    <property type="protein sequence ID" value="ACA66614.1"/>
    <property type="molecule type" value="Genomic_DNA"/>
</dbReference>
<dbReference type="RefSeq" id="WP_002213339.1">
    <property type="nucleotide sequence ID" value="NZ_CP009792.1"/>
</dbReference>
<dbReference type="SMR" id="B1JIX9"/>
<dbReference type="GeneID" id="97454249"/>
<dbReference type="KEGG" id="ypy:YPK_0301"/>
<dbReference type="PATRIC" id="fig|502800.11.peg.908"/>
<dbReference type="GO" id="GO:0022625">
    <property type="term" value="C:cytosolic large ribosomal subunit"/>
    <property type="evidence" value="ECO:0007669"/>
    <property type="project" value="TreeGrafter"/>
</dbReference>
<dbReference type="GO" id="GO:0003735">
    <property type="term" value="F:structural constituent of ribosome"/>
    <property type="evidence" value="ECO:0007669"/>
    <property type="project" value="InterPro"/>
</dbReference>
<dbReference type="GO" id="GO:0006412">
    <property type="term" value="P:translation"/>
    <property type="evidence" value="ECO:0007669"/>
    <property type="project" value="UniProtKB-UniRule"/>
</dbReference>
<dbReference type="CDD" id="cd01658">
    <property type="entry name" value="Ribosomal_L30"/>
    <property type="match status" value="1"/>
</dbReference>
<dbReference type="FunFam" id="3.30.1390.20:FF:000001">
    <property type="entry name" value="50S ribosomal protein L30"/>
    <property type="match status" value="1"/>
</dbReference>
<dbReference type="Gene3D" id="3.30.1390.20">
    <property type="entry name" value="Ribosomal protein L30, ferredoxin-like fold domain"/>
    <property type="match status" value="1"/>
</dbReference>
<dbReference type="HAMAP" id="MF_01371_B">
    <property type="entry name" value="Ribosomal_uL30_B"/>
    <property type="match status" value="1"/>
</dbReference>
<dbReference type="InterPro" id="IPR036919">
    <property type="entry name" value="Ribo_uL30_ferredoxin-like_sf"/>
</dbReference>
<dbReference type="InterPro" id="IPR005996">
    <property type="entry name" value="Ribosomal_uL30_bac-type"/>
</dbReference>
<dbReference type="InterPro" id="IPR018038">
    <property type="entry name" value="Ribosomal_uL30_CS"/>
</dbReference>
<dbReference type="InterPro" id="IPR016082">
    <property type="entry name" value="Ribosomal_uL30_ferredoxin-like"/>
</dbReference>
<dbReference type="NCBIfam" id="TIGR01308">
    <property type="entry name" value="rpmD_bact"/>
    <property type="match status" value="1"/>
</dbReference>
<dbReference type="PANTHER" id="PTHR15892:SF2">
    <property type="entry name" value="LARGE RIBOSOMAL SUBUNIT PROTEIN UL30M"/>
    <property type="match status" value="1"/>
</dbReference>
<dbReference type="PANTHER" id="PTHR15892">
    <property type="entry name" value="MITOCHONDRIAL RIBOSOMAL PROTEIN L30"/>
    <property type="match status" value="1"/>
</dbReference>
<dbReference type="Pfam" id="PF00327">
    <property type="entry name" value="Ribosomal_L30"/>
    <property type="match status" value="1"/>
</dbReference>
<dbReference type="PIRSF" id="PIRSF002211">
    <property type="entry name" value="Ribosomal_L30_bac-type"/>
    <property type="match status" value="1"/>
</dbReference>
<dbReference type="SUPFAM" id="SSF55129">
    <property type="entry name" value="Ribosomal protein L30p/L7e"/>
    <property type="match status" value="1"/>
</dbReference>
<dbReference type="PROSITE" id="PS00634">
    <property type="entry name" value="RIBOSOMAL_L30"/>
    <property type="match status" value="1"/>
</dbReference>
<gene>
    <name evidence="1" type="primary">rpmD</name>
    <name type="ordered locus">YPK_0301</name>
</gene>
<sequence>MAKTIKVTQTKSSIGRLPKHKATLIGLGLRRIGHTVEREDTPAVRGMVNLVSYMVKVEE</sequence>
<protein>
    <recommendedName>
        <fullName evidence="1">Large ribosomal subunit protein uL30</fullName>
    </recommendedName>
    <alternativeName>
        <fullName evidence="2">50S ribosomal protein L30</fullName>
    </alternativeName>
</protein>
<evidence type="ECO:0000255" key="1">
    <source>
        <dbReference type="HAMAP-Rule" id="MF_01371"/>
    </source>
</evidence>
<evidence type="ECO:0000305" key="2"/>
<accession>B1JIX9</accession>
<keyword id="KW-0687">Ribonucleoprotein</keyword>
<keyword id="KW-0689">Ribosomal protein</keyword>
<organism>
    <name type="scientific">Yersinia pseudotuberculosis serotype O:3 (strain YPIII)</name>
    <dbReference type="NCBI Taxonomy" id="502800"/>
    <lineage>
        <taxon>Bacteria</taxon>
        <taxon>Pseudomonadati</taxon>
        <taxon>Pseudomonadota</taxon>
        <taxon>Gammaproteobacteria</taxon>
        <taxon>Enterobacterales</taxon>
        <taxon>Yersiniaceae</taxon>
        <taxon>Yersinia</taxon>
    </lineage>
</organism>
<reference key="1">
    <citation type="submission" date="2008-02" db="EMBL/GenBank/DDBJ databases">
        <title>Complete sequence of Yersinia pseudotuberculosis YPIII.</title>
        <authorList>
            <consortium name="US DOE Joint Genome Institute"/>
            <person name="Copeland A."/>
            <person name="Lucas S."/>
            <person name="Lapidus A."/>
            <person name="Glavina del Rio T."/>
            <person name="Dalin E."/>
            <person name="Tice H."/>
            <person name="Bruce D."/>
            <person name="Goodwin L."/>
            <person name="Pitluck S."/>
            <person name="Munk A.C."/>
            <person name="Brettin T."/>
            <person name="Detter J.C."/>
            <person name="Han C."/>
            <person name="Tapia R."/>
            <person name="Schmutz J."/>
            <person name="Larimer F."/>
            <person name="Land M."/>
            <person name="Hauser L."/>
            <person name="Challacombe J.F."/>
            <person name="Green L."/>
            <person name="Lindler L.E."/>
            <person name="Nikolich M.P."/>
            <person name="Richardson P."/>
        </authorList>
    </citation>
    <scope>NUCLEOTIDE SEQUENCE [LARGE SCALE GENOMIC DNA]</scope>
    <source>
        <strain>YPIII</strain>
    </source>
</reference>